<organism>
    <name type="scientific">Acaryochloris marina (strain MBIC 11017)</name>
    <dbReference type="NCBI Taxonomy" id="329726"/>
    <lineage>
        <taxon>Bacteria</taxon>
        <taxon>Bacillati</taxon>
        <taxon>Cyanobacteriota</taxon>
        <taxon>Cyanophyceae</taxon>
        <taxon>Acaryochloridales</taxon>
        <taxon>Acaryochloridaceae</taxon>
        <taxon>Acaryochloris</taxon>
    </lineage>
</organism>
<keyword id="KW-0472">Membrane</keyword>
<keyword id="KW-0520">NAD</keyword>
<keyword id="KW-0521">NADP</keyword>
<keyword id="KW-0618">Plastoquinone</keyword>
<keyword id="KW-0874">Quinone</keyword>
<keyword id="KW-1185">Reference proteome</keyword>
<keyword id="KW-0793">Thylakoid</keyword>
<keyword id="KW-1278">Translocase</keyword>
<keyword id="KW-0812">Transmembrane</keyword>
<keyword id="KW-1133">Transmembrane helix</keyword>
<gene>
    <name evidence="1" type="primary">ndhD</name>
    <name type="ordered locus">AM1_2497</name>
</gene>
<proteinExistence type="inferred from homology"/>
<reference key="1">
    <citation type="journal article" date="2008" name="Proc. Natl. Acad. Sci. U.S.A.">
        <title>Niche adaptation and genome expansion in the chlorophyll d-producing cyanobacterium Acaryochloris marina.</title>
        <authorList>
            <person name="Swingley W.D."/>
            <person name="Chen M."/>
            <person name="Cheung P.C."/>
            <person name="Conrad A.L."/>
            <person name="Dejesa L.C."/>
            <person name="Hao J."/>
            <person name="Honchak B.M."/>
            <person name="Karbach L.E."/>
            <person name="Kurdoglu A."/>
            <person name="Lahiri S."/>
            <person name="Mastrian S.D."/>
            <person name="Miyashita H."/>
            <person name="Page L."/>
            <person name="Ramakrishna P."/>
            <person name="Satoh S."/>
            <person name="Sattley W.M."/>
            <person name="Shimada Y."/>
            <person name="Taylor H.L."/>
            <person name="Tomo T."/>
            <person name="Tsuchiya T."/>
            <person name="Wang Z.T."/>
            <person name="Raymond J."/>
            <person name="Mimuro M."/>
            <person name="Blankenship R.E."/>
            <person name="Touchman J.W."/>
        </authorList>
    </citation>
    <scope>NUCLEOTIDE SEQUENCE [LARGE SCALE GENOMIC DNA]</scope>
    <source>
        <strain>MBIC 11017</strain>
    </source>
</reference>
<protein>
    <recommendedName>
        <fullName evidence="1">NAD(P)H-quinone oxidoreductase chain 4</fullName>
        <ecNumber evidence="1">7.1.1.-</ecNumber>
    </recommendedName>
    <alternativeName>
        <fullName evidence="1">NAD(P)H dehydrogenase I, chain 4</fullName>
    </alternativeName>
    <alternativeName>
        <fullName evidence="1">NDH-1, chain 4</fullName>
    </alternativeName>
</protein>
<feature type="chain" id="PRO_0000343228" description="NAD(P)H-quinone oxidoreductase chain 4">
    <location>
        <begin position="1"/>
        <end position="534"/>
    </location>
</feature>
<feature type="transmembrane region" description="Helical" evidence="1">
    <location>
        <begin position="6"/>
        <end position="26"/>
    </location>
</feature>
<feature type="transmembrane region" description="Helical" evidence="1">
    <location>
        <begin position="38"/>
        <end position="58"/>
    </location>
</feature>
<feature type="transmembrane region" description="Helical" evidence="1">
    <location>
        <begin position="91"/>
        <end position="111"/>
    </location>
</feature>
<feature type="transmembrane region" description="Helical" evidence="1">
    <location>
        <begin position="117"/>
        <end position="137"/>
    </location>
</feature>
<feature type="transmembrane region" description="Helical" evidence="1">
    <location>
        <begin position="138"/>
        <end position="158"/>
    </location>
</feature>
<feature type="transmembrane region" description="Helical" evidence="1">
    <location>
        <begin position="171"/>
        <end position="191"/>
    </location>
</feature>
<feature type="transmembrane region" description="Helical" evidence="1">
    <location>
        <begin position="214"/>
        <end position="234"/>
    </location>
</feature>
<feature type="transmembrane region" description="Helical" evidence="1">
    <location>
        <begin position="245"/>
        <end position="265"/>
    </location>
</feature>
<feature type="transmembrane region" description="Helical" evidence="1">
    <location>
        <begin position="279"/>
        <end position="299"/>
    </location>
</feature>
<feature type="transmembrane region" description="Helical" evidence="1">
    <location>
        <begin position="316"/>
        <end position="336"/>
    </location>
</feature>
<feature type="transmembrane region" description="Helical" evidence="1">
    <location>
        <begin position="337"/>
        <end position="357"/>
    </location>
</feature>
<feature type="transmembrane region" description="Helical" evidence="1">
    <location>
        <begin position="377"/>
        <end position="399"/>
    </location>
</feature>
<feature type="transmembrane region" description="Helical" evidence="1">
    <location>
        <begin position="419"/>
        <end position="439"/>
    </location>
</feature>
<feature type="transmembrane region" description="Helical" evidence="1">
    <location>
        <begin position="466"/>
        <end position="486"/>
    </location>
</feature>
<comment type="function">
    <text evidence="1">NDH-1 shuttles electrons from NAD(P)H, via FMN and iron-sulfur (Fe-S) centers, to quinones in the respiratory chain. The immediate electron acceptor for the enzyme in this species is believed to be plastoquinone. Couples the redox reaction to proton translocation (for every two electrons transferred, four hydrogen ions are translocated across the cytoplasmic membrane), and thus conserves the redox energy in a proton gradient.</text>
</comment>
<comment type="catalytic activity">
    <reaction evidence="1">
        <text>a plastoquinone + NADH + (n+1) H(+)(in) = a plastoquinol + NAD(+) + n H(+)(out)</text>
        <dbReference type="Rhea" id="RHEA:42608"/>
        <dbReference type="Rhea" id="RHEA-COMP:9561"/>
        <dbReference type="Rhea" id="RHEA-COMP:9562"/>
        <dbReference type="ChEBI" id="CHEBI:15378"/>
        <dbReference type="ChEBI" id="CHEBI:17757"/>
        <dbReference type="ChEBI" id="CHEBI:57540"/>
        <dbReference type="ChEBI" id="CHEBI:57945"/>
        <dbReference type="ChEBI" id="CHEBI:62192"/>
    </reaction>
</comment>
<comment type="catalytic activity">
    <reaction evidence="1">
        <text>a plastoquinone + NADPH + (n+1) H(+)(in) = a plastoquinol + NADP(+) + n H(+)(out)</text>
        <dbReference type="Rhea" id="RHEA:42612"/>
        <dbReference type="Rhea" id="RHEA-COMP:9561"/>
        <dbReference type="Rhea" id="RHEA-COMP:9562"/>
        <dbReference type="ChEBI" id="CHEBI:15378"/>
        <dbReference type="ChEBI" id="CHEBI:17757"/>
        <dbReference type="ChEBI" id="CHEBI:57783"/>
        <dbReference type="ChEBI" id="CHEBI:58349"/>
        <dbReference type="ChEBI" id="CHEBI:62192"/>
    </reaction>
</comment>
<comment type="subcellular location">
    <subcellularLocation>
        <location evidence="1">Cellular thylakoid membrane</location>
        <topology evidence="1">Multi-pass membrane protein</topology>
    </subcellularLocation>
</comment>
<comment type="similarity">
    <text evidence="1">Belongs to the complex I subunit 4 family.</text>
</comment>
<name>NU4C_ACAM1</name>
<evidence type="ECO:0000255" key="1">
    <source>
        <dbReference type="HAMAP-Rule" id="MF_00491"/>
    </source>
</evidence>
<sequence length="534" mass="58668">MNPDTFPWLSTLIFFPIMATVALPFIPDPKGKGDPIRWYALVIGLIDFVLLIYAFYTQYDFAESGLQMVEHYDWLPQLGVQWSVGADGLSMPLILLTGFITSLAILASWPVTYKPRLFYFLILAMYGGQIAVFAVQDLLVFFLVWELELVPVYLLLSIWGGYKRLYAATKFILYTAISSLFILVAALAMAFFGPDLTFDLQSLAAKDYPLTFQLLCYTGFLVAFAVKLPIVPLHTWLPDAHGEATAPVHMLLAGILLKMGGYALIRMNVELLPDAHAYFAPALIILGVVNIIYAALTSFAQRNLKRKIAYSSISHMGFVLIGIASFTDLGMSGAVLQMVSHGLIGASLFFLVGATYDRTHTLILEEMGGVAQNMPKIFAMFTTCSMASLALPGMSGFVAELMVFVGLATSDAYSLAFRVPVVILAGIGVILTPIYLLSMLREIFYGPENKELTSHEKLVDAEPREIFVIACLLVPIIGIGLYPKIITQIYDAKTTQLVAYIRPSVPSIAMREAATVASVSDIEMDSSYQAPAIK</sequence>
<dbReference type="EC" id="7.1.1.-" evidence="1"/>
<dbReference type="EMBL" id="CP000828">
    <property type="protein sequence ID" value="ABW27505.1"/>
    <property type="molecule type" value="Genomic_DNA"/>
</dbReference>
<dbReference type="RefSeq" id="WP_012162965.1">
    <property type="nucleotide sequence ID" value="NC_009925.1"/>
</dbReference>
<dbReference type="SMR" id="B0C4B4"/>
<dbReference type="STRING" id="329726.AM1_2497"/>
<dbReference type="KEGG" id="amr:AM1_2497"/>
<dbReference type="eggNOG" id="COG1008">
    <property type="taxonomic scope" value="Bacteria"/>
</dbReference>
<dbReference type="HOGENOM" id="CLU_007100_4_0_3"/>
<dbReference type="OrthoDB" id="9811718at2"/>
<dbReference type="Proteomes" id="UP000000268">
    <property type="component" value="Chromosome"/>
</dbReference>
<dbReference type="GO" id="GO:0031676">
    <property type="term" value="C:plasma membrane-derived thylakoid membrane"/>
    <property type="evidence" value="ECO:0007669"/>
    <property type="project" value="UniProtKB-SubCell"/>
</dbReference>
<dbReference type="GO" id="GO:0008137">
    <property type="term" value="F:NADH dehydrogenase (ubiquinone) activity"/>
    <property type="evidence" value="ECO:0007669"/>
    <property type="project" value="InterPro"/>
</dbReference>
<dbReference type="GO" id="GO:0048039">
    <property type="term" value="F:ubiquinone binding"/>
    <property type="evidence" value="ECO:0007669"/>
    <property type="project" value="TreeGrafter"/>
</dbReference>
<dbReference type="GO" id="GO:0042773">
    <property type="term" value="P:ATP synthesis coupled electron transport"/>
    <property type="evidence" value="ECO:0007669"/>
    <property type="project" value="InterPro"/>
</dbReference>
<dbReference type="GO" id="GO:0015990">
    <property type="term" value="P:electron transport coupled proton transport"/>
    <property type="evidence" value="ECO:0007669"/>
    <property type="project" value="TreeGrafter"/>
</dbReference>
<dbReference type="HAMAP" id="MF_00491">
    <property type="entry name" value="NDH1_NuoM"/>
    <property type="match status" value="1"/>
</dbReference>
<dbReference type="InterPro" id="IPR000260">
    <property type="entry name" value="NADH4_N"/>
</dbReference>
<dbReference type="InterPro" id="IPR022997">
    <property type="entry name" value="NADH_Q_OxRdtase_chain4"/>
</dbReference>
<dbReference type="InterPro" id="IPR010227">
    <property type="entry name" value="NADH_Q_OxRdtase_chainM/4"/>
</dbReference>
<dbReference type="InterPro" id="IPR003918">
    <property type="entry name" value="NADH_UbQ_OxRdtase"/>
</dbReference>
<dbReference type="InterPro" id="IPR001750">
    <property type="entry name" value="ND/Mrp_TM"/>
</dbReference>
<dbReference type="NCBIfam" id="TIGR01972">
    <property type="entry name" value="NDH_I_M"/>
    <property type="match status" value="1"/>
</dbReference>
<dbReference type="NCBIfam" id="NF002713">
    <property type="entry name" value="PRK02546.1"/>
    <property type="match status" value="1"/>
</dbReference>
<dbReference type="NCBIfam" id="NF009212">
    <property type="entry name" value="PRK12561.1"/>
    <property type="match status" value="1"/>
</dbReference>
<dbReference type="PANTHER" id="PTHR43507:SF21">
    <property type="entry name" value="NAD(P)H-QUINONE OXIDOREDUCTASE CHAIN 4, CHLOROPLASTIC"/>
    <property type="match status" value="1"/>
</dbReference>
<dbReference type="PANTHER" id="PTHR43507">
    <property type="entry name" value="NADH-UBIQUINONE OXIDOREDUCTASE CHAIN 4"/>
    <property type="match status" value="1"/>
</dbReference>
<dbReference type="Pfam" id="PF01059">
    <property type="entry name" value="Oxidored_q5_N"/>
    <property type="match status" value="1"/>
</dbReference>
<dbReference type="Pfam" id="PF00361">
    <property type="entry name" value="Proton_antipo_M"/>
    <property type="match status" value="1"/>
</dbReference>
<dbReference type="PRINTS" id="PR01437">
    <property type="entry name" value="NUOXDRDTASE4"/>
</dbReference>
<accession>B0C4B4</accession>